<evidence type="ECO:0000255" key="1">
    <source>
        <dbReference type="HAMAP-Rule" id="MF_01382"/>
    </source>
</evidence>
<protein>
    <recommendedName>
        <fullName evidence="1">Protein translocase subunit SecA</fullName>
        <ecNumber evidence="1">7.4.2.8</ecNumber>
    </recommendedName>
</protein>
<comment type="function">
    <text evidence="1">Part of the Sec protein translocase complex. Interacts with the SecYEG preprotein conducting channel. Has a central role in coupling the hydrolysis of ATP to the transfer of proteins into and across the cell membrane, serving as an ATP-driven molecular motor driving the stepwise translocation of polypeptide chains across the membrane.</text>
</comment>
<comment type="catalytic activity">
    <reaction evidence="1">
        <text>ATP + H2O + cellular proteinSide 1 = ADP + phosphate + cellular proteinSide 2.</text>
        <dbReference type="EC" id="7.4.2.8"/>
    </reaction>
</comment>
<comment type="subunit">
    <text evidence="1">Monomer and homodimer. Part of the essential Sec protein translocation apparatus which comprises SecA, SecYEG and auxiliary proteins SecDF. Other proteins may also be involved.</text>
</comment>
<comment type="subcellular location">
    <subcellularLocation>
        <location evidence="1">Cell inner membrane</location>
        <topology evidence="1">Peripheral membrane protein</topology>
        <orientation evidence="1">Cytoplasmic side</orientation>
    </subcellularLocation>
    <subcellularLocation>
        <location evidence="1">Cytoplasm</location>
    </subcellularLocation>
    <text evidence="1">Distribution is 50-50.</text>
</comment>
<comment type="similarity">
    <text evidence="1">Belongs to the SecA family.</text>
</comment>
<organism>
    <name type="scientific">Chlamydia trachomatis serovar A (strain ATCC VR-571B / DSM 19440 / HAR-13)</name>
    <dbReference type="NCBI Taxonomy" id="315277"/>
    <lineage>
        <taxon>Bacteria</taxon>
        <taxon>Pseudomonadati</taxon>
        <taxon>Chlamydiota</taxon>
        <taxon>Chlamydiia</taxon>
        <taxon>Chlamydiales</taxon>
        <taxon>Chlamydiaceae</taxon>
        <taxon>Chlamydia/Chlamydophila group</taxon>
        <taxon>Chlamydia</taxon>
    </lineage>
</organism>
<proteinExistence type="inferred from homology"/>
<accession>Q3KKZ3</accession>
<gene>
    <name evidence="1" type="primary">secA</name>
    <name type="ordered locus">CTA_0762</name>
</gene>
<sequence length="969" mass="110390">MMDFLKRFFGSSQERILKRFQKLVEEVNACDEKFSSLSDDELRKKTPQLKQRYQDGESLDKLLPEAYGVVKNVCRRLAGTPVEVSGYHQQWDMVPYDVQILGAIAMHKGFITEMQTGEGKTLTAVMPLYLNALTGKPVHLVTVNDYLAQRDCEWVGSVLRWLGLTTGVLVSGSPPEKRKAIYQCDVVYGTASEFGFDYLRDNSIATRKEEQVGRGFYFAIIDEIDSVLIDEARTPLIISGPGEKHNPVYFELKDRVAELVYFQREMCNHIAIEARKVLDPFLGTDVLPKDKKVMEAISEACRALWLVSKGMPLNRVLRRVREHPDLRAMIDKWDVFYHAEQNKEQCLEKLSSLYIVVDEHNNDFELTDKGMLQWIEKIGGAAEDFVMMDMGHEYALIEEDATLSPADKLNRKIAVSEKDTQRKARAHGLRQLLRAHLLMEKDIDYIVRDDQIVIIDEHTGRPQSGRRFSEGLHQAIEAKEHVTIRKESQTFATVTLQNFFRLYEKLAGMTGTAITESREFKEIYSLYVLQVPTFKPCLRIDHNDAFYMTEREKYQAIVAEIISAHRSGKPILIGTESVEVSEKLSRILRQNRINHTVLNAKNHAQEAEIIAGAGKVGAVTVATNMAGRGTDIKLDEEAVAAGGLYVIGTSRHQSRRIDRQLRGRCARLGDPGAAKFFLSFEDRLMRLFASPKLNTLIRHFRPPEGEAMSDPMFDRLIETAQKRVEGRNYTIRKHTLEYDDVMNKQRQTIYAFRNDVLHAEDLFVVAKEQIEHVALALAFLILKDAHADHCSLPKIEEWLSYSFPVKLDDQEIRRLGDVDAVADYIGDLLIEAFDVKFSAMLAEFTEIIGSAANAQGICNDILRSVIISHIDEEWKVHLVDMDLLRSEVGLRSVGQKDPLIEFKNESFLLFEGLIRDIRIAIVKHLFALELSLTRSDRPDNAIPTVATAFHNHDNFRPMELTIVGEEEES</sequence>
<reference key="1">
    <citation type="journal article" date="2005" name="Infect. Immun.">
        <title>Comparative genomic analysis of Chlamydia trachomatis oculotropic and genitotropic strains.</title>
        <authorList>
            <person name="Carlson J.H."/>
            <person name="Porcella S.F."/>
            <person name="McClarty G."/>
            <person name="Caldwell H.D."/>
        </authorList>
    </citation>
    <scope>NUCLEOTIDE SEQUENCE [LARGE SCALE GENOMIC DNA]</scope>
    <source>
        <strain>ATCC VR-571B / DSM 19440 / HAR-13</strain>
    </source>
</reference>
<keyword id="KW-0067">ATP-binding</keyword>
<keyword id="KW-0997">Cell inner membrane</keyword>
<keyword id="KW-1003">Cell membrane</keyword>
<keyword id="KW-0963">Cytoplasm</keyword>
<keyword id="KW-0472">Membrane</keyword>
<keyword id="KW-0547">Nucleotide-binding</keyword>
<keyword id="KW-0653">Protein transport</keyword>
<keyword id="KW-1278">Translocase</keyword>
<keyword id="KW-0811">Translocation</keyword>
<keyword id="KW-0813">Transport</keyword>
<name>SECA_CHLTA</name>
<dbReference type="EC" id="7.4.2.8" evidence="1"/>
<dbReference type="EMBL" id="CP000051">
    <property type="protein sequence ID" value="AAX50979.1"/>
    <property type="molecule type" value="Genomic_DNA"/>
</dbReference>
<dbReference type="RefSeq" id="WP_011324839.1">
    <property type="nucleotide sequence ID" value="NC_007429.1"/>
</dbReference>
<dbReference type="SMR" id="Q3KKZ3"/>
<dbReference type="KEGG" id="cta:CTA_0762"/>
<dbReference type="HOGENOM" id="CLU_005314_0_0_0"/>
<dbReference type="Proteomes" id="UP000002532">
    <property type="component" value="Chromosome"/>
</dbReference>
<dbReference type="GO" id="GO:0031522">
    <property type="term" value="C:cell envelope Sec protein transport complex"/>
    <property type="evidence" value="ECO:0007669"/>
    <property type="project" value="TreeGrafter"/>
</dbReference>
<dbReference type="GO" id="GO:0005829">
    <property type="term" value="C:cytosol"/>
    <property type="evidence" value="ECO:0007669"/>
    <property type="project" value="TreeGrafter"/>
</dbReference>
<dbReference type="GO" id="GO:0005886">
    <property type="term" value="C:plasma membrane"/>
    <property type="evidence" value="ECO:0007669"/>
    <property type="project" value="UniProtKB-SubCell"/>
</dbReference>
<dbReference type="GO" id="GO:0005524">
    <property type="term" value="F:ATP binding"/>
    <property type="evidence" value="ECO:0007669"/>
    <property type="project" value="UniProtKB-UniRule"/>
</dbReference>
<dbReference type="GO" id="GO:0008564">
    <property type="term" value="F:protein-exporting ATPase activity"/>
    <property type="evidence" value="ECO:0007669"/>
    <property type="project" value="UniProtKB-EC"/>
</dbReference>
<dbReference type="GO" id="GO:0065002">
    <property type="term" value="P:intracellular protein transmembrane transport"/>
    <property type="evidence" value="ECO:0007669"/>
    <property type="project" value="UniProtKB-UniRule"/>
</dbReference>
<dbReference type="GO" id="GO:0017038">
    <property type="term" value="P:protein import"/>
    <property type="evidence" value="ECO:0007669"/>
    <property type="project" value="InterPro"/>
</dbReference>
<dbReference type="GO" id="GO:0006605">
    <property type="term" value="P:protein targeting"/>
    <property type="evidence" value="ECO:0007669"/>
    <property type="project" value="UniProtKB-UniRule"/>
</dbReference>
<dbReference type="GO" id="GO:0043952">
    <property type="term" value="P:protein transport by the Sec complex"/>
    <property type="evidence" value="ECO:0007669"/>
    <property type="project" value="TreeGrafter"/>
</dbReference>
<dbReference type="CDD" id="cd17928">
    <property type="entry name" value="DEXDc_SecA"/>
    <property type="match status" value="1"/>
</dbReference>
<dbReference type="CDD" id="cd18803">
    <property type="entry name" value="SF2_C_secA"/>
    <property type="match status" value="1"/>
</dbReference>
<dbReference type="FunFam" id="3.40.50.300:FF:000694">
    <property type="entry name" value="Preprotein translocase subunit SecA"/>
    <property type="match status" value="1"/>
</dbReference>
<dbReference type="FunFam" id="1.10.3060.10:FF:000011">
    <property type="entry name" value="Protein translocase subunit SecA"/>
    <property type="match status" value="1"/>
</dbReference>
<dbReference type="FunFam" id="3.40.50.300:FF:000787">
    <property type="entry name" value="Protein translocase subunit SecA"/>
    <property type="match status" value="1"/>
</dbReference>
<dbReference type="Gene3D" id="1.10.3060.10">
    <property type="entry name" value="Helical scaffold and wing domains of SecA"/>
    <property type="match status" value="1"/>
</dbReference>
<dbReference type="Gene3D" id="3.40.50.300">
    <property type="entry name" value="P-loop containing nucleotide triphosphate hydrolases"/>
    <property type="match status" value="3"/>
</dbReference>
<dbReference type="Gene3D" id="3.90.1440.10">
    <property type="entry name" value="SecA, preprotein cross-linking domain"/>
    <property type="match status" value="1"/>
</dbReference>
<dbReference type="HAMAP" id="MF_01382">
    <property type="entry name" value="SecA"/>
    <property type="match status" value="1"/>
</dbReference>
<dbReference type="InterPro" id="IPR014001">
    <property type="entry name" value="Helicase_ATP-bd"/>
</dbReference>
<dbReference type="InterPro" id="IPR001650">
    <property type="entry name" value="Helicase_C-like"/>
</dbReference>
<dbReference type="InterPro" id="IPR027417">
    <property type="entry name" value="P-loop_NTPase"/>
</dbReference>
<dbReference type="InterPro" id="IPR000185">
    <property type="entry name" value="SecA"/>
</dbReference>
<dbReference type="InterPro" id="IPR020937">
    <property type="entry name" value="SecA_CS"/>
</dbReference>
<dbReference type="InterPro" id="IPR011115">
    <property type="entry name" value="SecA_DEAD"/>
</dbReference>
<dbReference type="InterPro" id="IPR014018">
    <property type="entry name" value="SecA_motor_DEAD"/>
</dbReference>
<dbReference type="InterPro" id="IPR011130">
    <property type="entry name" value="SecA_preprotein_X-link_dom"/>
</dbReference>
<dbReference type="InterPro" id="IPR044722">
    <property type="entry name" value="SecA_SF2_C"/>
</dbReference>
<dbReference type="InterPro" id="IPR011116">
    <property type="entry name" value="SecA_Wing/Scaffold"/>
</dbReference>
<dbReference type="InterPro" id="IPR036266">
    <property type="entry name" value="SecA_Wing/Scaffold_sf"/>
</dbReference>
<dbReference type="InterPro" id="IPR036670">
    <property type="entry name" value="SecA_X-link_sf"/>
</dbReference>
<dbReference type="NCBIfam" id="TIGR00963">
    <property type="entry name" value="secA"/>
    <property type="match status" value="1"/>
</dbReference>
<dbReference type="PANTHER" id="PTHR30612:SF0">
    <property type="entry name" value="CHLOROPLAST PROTEIN-TRANSPORTING ATPASE"/>
    <property type="match status" value="1"/>
</dbReference>
<dbReference type="PANTHER" id="PTHR30612">
    <property type="entry name" value="SECA INNER MEMBRANE COMPONENT OF SEC PROTEIN SECRETION SYSTEM"/>
    <property type="match status" value="1"/>
</dbReference>
<dbReference type="Pfam" id="PF21090">
    <property type="entry name" value="P-loop_SecA"/>
    <property type="match status" value="1"/>
</dbReference>
<dbReference type="Pfam" id="PF07517">
    <property type="entry name" value="SecA_DEAD"/>
    <property type="match status" value="1"/>
</dbReference>
<dbReference type="Pfam" id="PF01043">
    <property type="entry name" value="SecA_PP_bind"/>
    <property type="match status" value="1"/>
</dbReference>
<dbReference type="Pfam" id="PF07516">
    <property type="entry name" value="SecA_SW"/>
    <property type="match status" value="1"/>
</dbReference>
<dbReference type="PRINTS" id="PR00906">
    <property type="entry name" value="SECA"/>
</dbReference>
<dbReference type="SMART" id="SM00957">
    <property type="entry name" value="SecA_DEAD"/>
    <property type="match status" value="1"/>
</dbReference>
<dbReference type="SMART" id="SM00958">
    <property type="entry name" value="SecA_PP_bind"/>
    <property type="match status" value="1"/>
</dbReference>
<dbReference type="SUPFAM" id="SSF81886">
    <property type="entry name" value="Helical scaffold and wing domains of SecA"/>
    <property type="match status" value="1"/>
</dbReference>
<dbReference type="SUPFAM" id="SSF52540">
    <property type="entry name" value="P-loop containing nucleoside triphosphate hydrolases"/>
    <property type="match status" value="2"/>
</dbReference>
<dbReference type="SUPFAM" id="SSF81767">
    <property type="entry name" value="Pre-protein crosslinking domain of SecA"/>
    <property type="match status" value="1"/>
</dbReference>
<dbReference type="PROSITE" id="PS01312">
    <property type="entry name" value="SECA"/>
    <property type="match status" value="1"/>
</dbReference>
<dbReference type="PROSITE" id="PS51196">
    <property type="entry name" value="SECA_MOTOR_DEAD"/>
    <property type="match status" value="1"/>
</dbReference>
<feature type="chain" id="PRO_1000073471" description="Protein translocase subunit SecA">
    <location>
        <begin position="1"/>
        <end position="969"/>
    </location>
</feature>
<feature type="binding site" evidence="1">
    <location>
        <position position="99"/>
    </location>
    <ligand>
        <name>ATP</name>
        <dbReference type="ChEBI" id="CHEBI:30616"/>
    </ligand>
</feature>
<feature type="binding site" evidence="1">
    <location>
        <begin position="117"/>
        <end position="121"/>
    </location>
    <ligand>
        <name>ATP</name>
        <dbReference type="ChEBI" id="CHEBI:30616"/>
    </ligand>
</feature>
<feature type="binding site" evidence="1">
    <location>
        <position position="631"/>
    </location>
    <ligand>
        <name>ATP</name>
        <dbReference type="ChEBI" id="CHEBI:30616"/>
    </ligand>
</feature>